<sequence>MSVLQVLHIPDERLRKVAKPVEEVNAEIQRIVDDMFETMYAEEGIGLAATQVDIHQRIIVIDVSENRDERLVLINPELLEKSGETGIEEGCLSIPEQRALVPRAEKVKIRALDRDGKPFELEAEGLLAICIQHEMDHLVGKLFMDYLSPLKQQRIRQKVEKLDRLKARA</sequence>
<proteinExistence type="inferred from homology"/>
<feature type="chain" id="PRO_1000200727" description="Peptide deformylase">
    <location>
        <begin position="1"/>
        <end position="169"/>
    </location>
</feature>
<feature type="active site" evidence="1">
    <location>
        <position position="134"/>
    </location>
</feature>
<feature type="binding site" evidence="1">
    <location>
        <position position="91"/>
    </location>
    <ligand>
        <name>Fe cation</name>
        <dbReference type="ChEBI" id="CHEBI:24875"/>
    </ligand>
</feature>
<feature type="binding site" evidence="1">
    <location>
        <position position="133"/>
    </location>
    <ligand>
        <name>Fe cation</name>
        <dbReference type="ChEBI" id="CHEBI:24875"/>
    </ligand>
</feature>
<feature type="binding site" evidence="1">
    <location>
        <position position="137"/>
    </location>
    <ligand>
        <name>Fe cation</name>
        <dbReference type="ChEBI" id="CHEBI:24875"/>
    </ligand>
</feature>
<evidence type="ECO:0000255" key="1">
    <source>
        <dbReference type="HAMAP-Rule" id="MF_00163"/>
    </source>
</evidence>
<name>DEF_ECOSM</name>
<keyword id="KW-0378">Hydrolase</keyword>
<keyword id="KW-0408">Iron</keyword>
<keyword id="KW-0479">Metal-binding</keyword>
<keyword id="KW-0648">Protein biosynthesis</keyword>
<reference key="1">
    <citation type="journal article" date="2008" name="J. Bacteriol.">
        <title>Insights into the environmental resistance gene pool from the genome sequence of the multidrug-resistant environmental isolate Escherichia coli SMS-3-5.</title>
        <authorList>
            <person name="Fricke W.F."/>
            <person name="Wright M.S."/>
            <person name="Lindell A.H."/>
            <person name="Harkins D.M."/>
            <person name="Baker-Austin C."/>
            <person name="Ravel J."/>
            <person name="Stepanauskas R."/>
        </authorList>
    </citation>
    <scope>NUCLEOTIDE SEQUENCE [LARGE SCALE GENOMIC DNA]</scope>
    <source>
        <strain>SMS-3-5 / SECEC</strain>
    </source>
</reference>
<comment type="function">
    <text evidence="1">Removes the formyl group from the N-terminal Met of newly synthesized proteins. Requires at least a dipeptide for an efficient rate of reaction. N-terminal L-methionine is a prerequisite for activity but the enzyme has broad specificity at other positions.</text>
</comment>
<comment type="catalytic activity">
    <reaction evidence="1">
        <text>N-terminal N-formyl-L-methionyl-[peptide] + H2O = N-terminal L-methionyl-[peptide] + formate</text>
        <dbReference type="Rhea" id="RHEA:24420"/>
        <dbReference type="Rhea" id="RHEA-COMP:10639"/>
        <dbReference type="Rhea" id="RHEA-COMP:10640"/>
        <dbReference type="ChEBI" id="CHEBI:15377"/>
        <dbReference type="ChEBI" id="CHEBI:15740"/>
        <dbReference type="ChEBI" id="CHEBI:49298"/>
        <dbReference type="ChEBI" id="CHEBI:64731"/>
        <dbReference type="EC" id="3.5.1.88"/>
    </reaction>
</comment>
<comment type="cofactor">
    <cofactor evidence="1">
        <name>Fe(2+)</name>
        <dbReference type="ChEBI" id="CHEBI:29033"/>
    </cofactor>
    <text evidence="1">Binds 1 Fe(2+) ion.</text>
</comment>
<comment type="similarity">
    <text evidence="1">Belongs to the polypeptide deformylase family.</text>
</comment>
<gene>
    <name evidence="1" type="primary">def</name>
    <name type="ordered locus">EcSMS35_3582</name>
</gene>
<dbReference type="EC" id="3.5.1.88" evidence="1"/>
<dbReference type="EMBL" id="CP000970">
    <property type="protein sequence ID" value="ACB16736.1"/>
    <property type="molecule type" value="Genomic_DNA"/>
</dbReference>
<dbReference type="RefSeq" id="WP_000114986.1">
    <property type="nucleotide sequence ID" value="NC_010498.1"/>
</dbReference>
<dbReference type="SMR" id="B1LGP3"/>
<dbReference type="GeneID" id="93778701"/>
<dbReference type="KEGG" id="ecm:EcSMS35_3582"/>
<dbReference type="HOGENOM" id="CLU_061901_2_1_6"/>
<dbReference type="Proteomes" id="UP000007011">
    <property type="component" value="Chromosome"/>
</dbReference>
<dbReference type="GO" id="GO:0046872">
    <property type="term" value="F:metal ion binding"/>
    <property type="evidence" value="ECO:0007669"/>
    <property type="project" value="UniProtKB-KW"/>
</dbReference>
<dbReference type="GO" id="GO:0042586">
    <property type="term" value="F:peptide deformylase activity"/>
    <property type="evidence" value="ECO:0007669"/>
    <property type="project" value="UniProtKB-UniRule"/>
</dbReference>
<dbReference type="GO" id="GO:0043686">
    <property type="term" value="P:co-translational protein modification"/>
    <property type="evidence" value="ECO:0007669"/>
    <property type="project" value="TreeGrafter"/>
</dbReference>
<dbReference type="GO" id="GO:0006412">
    <property type="term" value="P:translation"/>
    <property type="evidence" value="ECO:0007669"/>
    <property type="project" value="UniProtKB-UniRule"/>
</dbReference>
<dbReference type="CDD" id="cd00487">
    <property type="entry name" value="Pep_deformylase"/>
    <property type="match status" value="1"/>
</dbReference>
<dbReference type="FunFam" id="3.90.45.10:FF:000001">
    <property type="entry name" value="Peptide deformylase"/>
    <property type="match status" value="1"/>
</dbReference>
<dbReference type="Gene3D" id="3.90.45.10">
    <property type="entry name" value="Peptide deformylase"/>
    <property type="match status" value="1"/>
</dbReference>
<dbReference type="HAMAP" id="MF_00163">
    <property type="entry name" value="Pep_deformylase"/>
    <property type="match status" value="1"/>
</dbReference>
<dbReference type="InterPro" id="IPR023635">
    <property type="entry name" value="Peptide_deformylase"/>
</dbReference>
<dbReference type="InterPro" id="IPR036821">
    <property type="entry name" value="Peptide_deformylase_sf"/>
</dbReference>
<dbReference type="NCBIfam" id="TIGR00079">
    <property type="entry name" value="pept_deformyl"/>
    <property type="match status" value="1"/>
</dbReference>
<dbReference type="NCBIfam" id="NF001159">
    <property type="entry name" value="PRK00150.1-3"/>
    <property type="match status" value="1"/>
</dbReference>
<dbReference type="PANTHER" id="PTHR10458">
    <property type="entry name" value="PEPTIDE DEFORMYLASE"/>
    <property type="match status" value="1"/>
</dbReference>
<dbReference type="PANTHER" id="PTHR10458:SF21">
    <property type="entry name" value="PEPTIDE DEFORMYLASE"/>
    <property type="match status" value="1"/>
</dbReference>
<dbReference type="Pfam" id="PF01327">
    <property type="entry name" value="Pep_deformylase"/>
    <property type="match status" value="1"/>
</dbReference>
<dbReference type="PIRSF" id="PIRSF004749">
    <property type="entry name" value="Pep_def"/>
    <property type="match status" value="1"/>
</dbReference>
<dbReference type="PRINTS" id="PR01576">
    <property type="entry name" value="PDEFORMYLASE"/>
</dbReference>
<dbReference type="SUPFAM" id="SSF56420">
    <property type="entry name" value="Peptide deformylase"/>
    <property type="match status" value="1"/>
</dbReference>
<accession>B1LGP3</accession>
<organism>
    <name type="scientific">Escherichia coli (strain SMS-3-5 / SECEC)</name>
    <dbReference type="NCBI Taxonomy" id="439855"/>
    <lineage>
        <taxon>Bacteria</taxon>
        <taxon>Pseudomonadati</taxon>
        <taxon>Pseudomonadota</taxon>
        <taxon>Gammaproteobacteria</taxon>
        <taxon>Enterobacterales</taxon>
        <taxon>Enterobacteriaceae</taxon>
        <taxon>Escherichia</taxon>
    </lineage>
</organism>
<protein>
    <recommendedName>
        <fullName evidence="1">Peptide deformylase</fullName>
        <shortName evidence="1">PDF</shortName>
        <ecNumber evidence="1">3.5.1.88</ecNumber>
    </recommendedName>
    <alternativeName>
        <fullName evidence="1">Polypeptide deformylase</fullName>
    </alternativeName>
</protein>